<organism>
    <name type="scientific">Lucilia cuprina</name>
    <name type="common">Green bottle fly</name>
    <name type="synonym">Australian sheep blowfly</name>
    <dbReference type="NCBI Taxonomy" id="7375"/>
    <lineage>
        <taxon>Eukaryota</taxon>
        <taxon>Metazoa</taxon>
        <taxon>Ecdysozoa</taxon>
        <taxon>Arthropoda</taxon>
        <taxon>Hexapoda</taxon>
        <taxon>Insecta</taxon>
        <taxon>Pterygota</taxon>
        <taxon>Neoptera</taxon>
        <taxon>Endopterygota</taxon>
        <taxon>Diptera</taxon>
        <taxon>Brachycera</taxon>
        <taxon>Muscomorpha</taxon>
        <taxon>Oestroidea</taxon>
        <taxon>Calliphoridae</taxon>
        <taxon>Luciliinae</taxon>
        <taxon>Lucilia</taxon>
    </lineage>
</organism>
<dbReference type="EMBL" id="AY055470">
    <property type="protein sequence ID" value="AAL15463.1"/>
    <property type="molecule type" value="mRNA"/>
</dbReference>
<dbReference type="EMBL" id="AF515826">
    <property type="protein sequence ID" value="AAM55223.1"/>
    <property type="molecule type" value="Genomic_DNA"/>
</dbReference>
<dbReference type="OrthoDB" id="8031570at2759"/>
<dbReference type="GO" id="GO:0005576">
    <property type="term" value="C:extracellular region"/>
    <property type="evidence" value="ECO:0007669"/>
    <property type="project" value="InterPro"/>
</dbReference>
<dbReference type="GO" id="GO:0008061">
    <property type="term" value="F:chitin binding"/>
    <property type="evidence" value="ECO:0007669"/>
    <property type="project" value="InterPro"/>
</dbReference>
<dbReference type="InterPro" id="IPR002557">
    <property type="entry name" value="Chitin-bd_dom"/>
</dbReference>
<dbReference type="InterPro" id="IPR036508">
    <property type="entry name" value="Chitin-bd_dom_sf"/>
</dbReference>
<dbReference type="SUPFAM" id="SSF57625">
    <property type="entry name" value="Invertebrate chitin-binding proteins"/>
    <property type="match status" value="1"/>
</dbReference>
<dbReference type="PROSITE" id="PS50940">
    <property type="entry name" value="CHIT_BIND_II"/>
    <property type="match status" value="1"/>
</dbReference>
<comment type="function">
    <text>May bind oligosaccharide structures.</text>
</comment>
<comment type="tissue specificity">
    <text evidence="3">Larval peritrophic membrane.</text>
</comment>
<comment type="developmental stage">
    <text evidence="3">Expressed in all 3 larval instars but not adults or eggs.</text>
</comment>
<comment type="PTM">
    <text>Glycosylated.</text>
</comment>
<reference key="1">
    <citation type="journal article" date="2003" name="Insect Biochem. Mol. Biol.">
        <title>Identification of an immuno-protective mucin-like protein, peritrophin-55, from the peritrophic matrix of Lucilia cuprina larvae.</title>
        <authorList>
            <person name="Tellam R.L."/>
            <person name="Vuocolo T."/>
            <person name="Eisemann C.H."/>
            <person name="Briscoe S."/>
            <person name="Riding G.A."/>
            <person name="Elvin C.M."/>
            <person name="Pearson R.D."/>
        </authorList>
    </citation>
    <scope>NUCLEOTIDE SEQUENCE [GENOMIC DNA / MRNA]</scope>
    <scope>PROTEIN SEQUENCE OF 20-57 AND 60-94</scope>
    <scope>TISSUE SPECIFICITY</scope>
    <scope>DEVELOPMENTAL STAGE</scope>
    <source>
        <tissue>Larva</tissue>
    </source>
</reference>
<proteinExistence type="evidence at protein level"/>
<sequence>MKSVFVCTLVLALAHHAFAGVCDSNVDYNSTLITPCLGNDIIVLWPNYLNFNTYYKCVEFGKPQLMDCPPNTYFTYYFQQCTGCDNFIPAPTCEYLKQTTDVECVPLVKPTTAAPTTLKTTPSKTTPIVTTAPPSTPVPSTIVTNKPDPTTPKTTKPPKVTTTVNPSPPTGTGPATNAPSSDIPLPPIASTVNTKYPTPPGMPPTPPSFGTPPSIVQLQN</sequence>
<protein>
    <recommendedName>
        <fullName>Peritrophin-55</fullName>
    </recommendedName>
</protein>
<evidence type="ECO:0000255" key="1">
    <source>
        <dbReference type="PROSITE-ProRule" id="PRU00144"/>
    </source>
</evidence>
<evidence type="ECO:0000256" key="2">
    <source>
        <dbReference type="SAM" id="MobiDB-lite"/>
    </source>
</evidence>
<evidence type="ECO:0000269" key="3">
    <source>
    </source>
</evidence>
<evidence type="ECO:0000305" key="4"/>
<name>PE55_LUCCU</name>
<accession>Q95UE8</accession>
<accession>Q8MUP5</accession>
<keyword id="KW-0903">Direct protein sequencing</keyword>
<keyword id="KW-1015">Disulfide bond</keyword>
<keyword id="KW-0325">Glycoprotein</keyword>
<keyword id="KW-0732">Signal</keyword>
<feature type="signal peptide" evidence="3">
    <location>
        <begin position="1"/>
        <end position="19"/>
    </location>
</feature>
<feature type="chain" id="PRO_0000023618" description="Peritrophin-55">
    <location>
        <begin position="20"/>
        <end position="220"/>
    </location>
</feature>
<feature type="domain" description="Chitin-binding type-2" evidence="1">
    <location>
        <begin position="33"/>
        <end position="95"/>
    </location>
</feature>
<feature type="region of interest" description="Disordered" evidence="2">
    <location>
        <begin position="116"/>
        <end position="220"/>
    </location>
</feature>
<feature type="compositionally biased region" description="Low complexity" evidence="2">
    <location>
        <begin position="116"/>
        <end position="165"/>
    </location>
</feature>
<feature type="compositionally biased region" description="Pro residues" evidence="2">
    <location>
        <begin position="197"/>
        <end position="210"/>
    </location>
</feature>
<feature type="glycosylation site" description="N-linked (GlcNAc...) asparagine" evidence="4">
    <location>
        <position position="29"/>
    </location>
</feature>
<feature type="disulfide bond" evidence="1">
    <location>
        <begin position="68"/>
        <end position="84"/>
    </location>
</feature>
<feature type="sequence conflict" description="In Ref. 1; AAL15463." evidence="4" ref="1">
    <original>D</original>
    <variation>H</variation>
    <location>
        <position position="67"/>
    </location>
</feature>
<feature type="sequence conflict" description="In Ref. 1; AA sequence." evidence="4" ref="1">
    <original>P</original>
    <variation>F</variation>
    <location>
        <position position="69"/>
    </location>
</feature>
<feature type="sequence conflict" description="In Ref. 1; AAM55223." evidence="4" ref="1">
    <original>I</original>
    <variation>P</variation>
    <location>
        <position position="142"/>
    </location>
</feature>
<feature type="sequence conflict" description="In Ref. 1; AAM55223." evidence="4" ref="1">
    <original>V</original>
    <variation>G</variation>
    <location>
        <position position="164"/>
    </location>
</feature>
<feature type="sequence conflict" description="In Ref. 1; AAM55223." evidence="4" ref="1">
    <original>S</original>
    <variation>P</variation>
    <location>
        <position position="190"/>
    </location>
</feature>